<proteinExistence type="inferred from homology"/>
<evidence type="ECO:0000255" key="1">
    <source>
        <dbReference type="HAMAP-Rule" id="MF_00753"/>
    </source>
</evidence>
<reference key="1">
    <citation type="journal article" date="2009" name="PLoS Genet.">
        <title>Organised genome dynamics in the Escherichia coli species results in highly diverse adaptive paths.</title>
        <authorList>
            <person name="Touchon M."/>
            <person name="Hoede C."/>
            <person name="Tenaillon O."/>
            <person name="Barbe V."/>
            <person name="Baeriswyl S."/>
            <person name="Bidet P."/>
            <person name="Bingen E."/>
            <person name="Bonacorsi S."/>
            <person name="Bouchier C."/>
            <person name="Bouvet O."/>
            <person name="Calteau A."/>
            <person name="Chiapello H."/>
            <person name="Clermont O."/>
            <person name="Cruveiller S."/>
            <person name="Danchin A."/>
            <person name="Diard M."/>
            <person name="Dossat C."/>
            <person name="Karoui M.E."/>
            <person name="Frapy E."/>
            <person name="Garry L."/>
            <person name="Ghigo J.M."/>
            <person name="Gilles A.M."/>
            <person name="Johnson J."/>
            <person name="Le Bouguenec C."/>
            <person name="Lescat M."/>
            <person name="Mangenot S."/>
            <person name="Martinez-Jehanne V."/>
            <person name="Matic I."/>
            <person name="Nassif X."/>
            <person name="Oztas S."/>
            <person name="Petit M.A."/>
            <person name="Pichon C."/>
            <person name="Rouy Z."/>
            <person name="Ruf C.S."/>
            <person name="Schneider D."/>
            <person name="Tourret J."/>
            <person name="Vacherie B."/>
            <person name="Vallenet D."/>
            <person name="Medigue C."/>
            <person name="Rocha E.P.C."/>
            <person name="Denamur E."/>
        </authorList>
    </citation>
    <scope>NUCLEOTIDE SEQUENCE [LARGE SCALE GENOMIC DNA]</scope>
    <source>
        <strain>IAI39 / ExPEC</strain>
    </source>
</reference>
<protein>
    <recommendedName>
        <fullName evidence="1">Anaerobic glycerol-3-phosphate dehydrogenase subunit B</fullName>
        <shortName evidence="1">Anaerobic G-3-P dehydrogenase subunit B</shortName>
        <shortName evidence="1">Anaerobic G3Pdhase B</shortName>
        <ecNumber evidence="1">1.1.5.3</ecNumber>
    </recommendedName>
</protein>
<comment type="function">
    <text evidence="1">Conversion of glycerol 3-phosphate to dihydroxyacetone. Uses fumarate or nitrate as electron acceptor.</text>
</comment>
<comment type="catalytic activity">
    <reaction evidence="1">
        <text>a quinone + sn-glycerol 3-phosphate = dihydroxyacetone phosphate + a quinol</text>
        <dbReference type="Rhea" id="RHEA:18977"/>
        <dbReference type="ChEBI" id="CHEBI:24646"/>
        <dbReference type="ChEBI" id="CHEBI:57597"/>
        <dbReference type="ChEBI" id="CHEBI:57642"/>
        <dbReference type="ChEBI" id="CHEBI:132124"/>
        <dbReference type="EC" id="1.1.5.3"/>
    </reaction>
</comment>
<comment type="cofactor">
    <cofactor evidence="1">
        <name>FMN</name>
        <dbReference type="ChEBI" id="CHEBI:58210"/>
    </cofactor>
</comment>
<comment type="pathway">
    <text evidence="1">Polyol metabolism; glycerol degradation via glycerol kinase pathway; glycerone phosphate from sn-glycerol 3-phosphate (anaerobic route): step 1/1.</text>
</comment>
<comment type="subunit">
    <text evidence="1">Composed of a catalytic GlpA/B dimer and of membrane bound GlpC.</text>
</comment>
<comment type="similarity">
    <text evidence="1">Belongs to the anaerobic G-3-P dehydrogenase subunit B family.</text>
</comment>
<gene>
    <name evidence="1" type="primary">glpB</name>
    <name type="ordered locus">ECIAI39_2385</name>
</gene>
<accession>B7NN59</accession>
<keyword id="KW-0285">Flavoprotein</keyword>
<keyword id="KW-0288">FMN</keyword>
<keyword id="KW-0560">Oxidoreductase</keyword>
<sequence length="419" mass="45329">MRFDTVIMGGGLAGLLCGLQLQKHDLRCAIVTRGQSALHFSSGSLDLLSHLPDGQPVTDIHSGLESLRQQAPAHPYTLLGPQRVLDLACQAQALIAESGAQLQGSVELAHQRVTPLGTLRSTWLSAPEVPVWPLPAKKICVVGISGLMDFQAHLAAASLRELDLAVETAEIELPELDVLRNNATEFRAVNIARFLDNEENWPLLLDALIPVANTCEMILMPACFGLADGKLWRWLNEKLPCSLMLLPTLPPSVLGIRLQNQLQRQFVRQGGVWMPGDEVKKVTCKNGVVNEIWTRNHADIPLRPRFAVLASGSFFSGGLVAERDGILEPILGLDVLQTATRSEWYKGDFFAPQPWQQFGVTTDETLRPSQAGQTIENLFAIGSVLGGFDPIAQGCGGGVCAVSALHAAQQIAQRAGGQQ</sequence>
<name>GLPB_ECO7I</name>
<feature type="chain" id="PRO_1000133357" description="Anaerobic glycerol-3-phosphate dehydrogenase subunit B">
    <location>
        <begin position="1"/>
        <end position="419"/>
    </location>
</feature>
<dbReference type="EC" id="1.1.5.3" evidence="1"/>
<dbReference type="EMBL" id="CU928164">
    <property type="protein sequence ID" value="CAR18511.1"/>
    <property type="molecule type" value="Genomic_DNA"/>
</dbReference>
<dbReference type="RefSeq" id="WP_001209881.1">
    <property type="nucleotide sequence ID" value="NC_011750.1"/>
</dbReference>
<dbReference type="RefSeq" id="YP_002408343.1">
    <property type="nucleotide sequence ID" value="NC_011750.1"/>
</dbReference>
<dbReference type="STRING" id="585057.ECIAI39_2385"/>
<dbReference type="KEGG" id="ect:ECIAI39_2385"/>
<dbReference type="PATRIC" id="fig|585057.6.peg.2484"/>
<dbReference type="HOGENOM" id="CLU_047793_0_0_6"/>
<dbReference type="UniPathway" id="UPA00618">
    <property type="reaction ID" value="UER00673"/>
</dbReference>
<dbReference type="Proteomes" id="UP000000749">
    <property type="component" value="Chromosome"/>
</dbReference>
<dbReference type="GO" id="GO:0009331">
    <property type="term" value="C:glycerol-3-phosphate dehydrogenase (FAD) complex"/>
    <property type="evidence" value="ECO:0007669"/>
    <property type="project" value="InterPro"/>
</dbReference>
<dbReference type="GO" id="GO:0004368">
    <property type="term" value="F:glycerol-3-phosphate dehydrogenase (quinone) activity"/>
    <property type="evidence" value="ECO:0007669"/>
    <property type="project" value="UniProtKB-UniRule"/>
</dbReference>
<dbReference type="GO" id="GO:0019563">
    <property type="term" value="P:glycerol catabolic process"/>
    <property type="evidence" value="ECO:0007669"/>
    <property type="project" value="UniProtKB-UniRule"/>
</dbReference>
<dbReference type="HAMAP" id="MF_00753">
    <property type="entry name" value="Glycerol3P_GlpB"/>
    <property type="match status" value="1"/>
</dbReference>
<dbReference type="InterPro" id="IPR003953">
    <property type="entry name" value="FAD-dep_OxRdtase_2_FAD-bd"/>
</dbReference>
<dbReference type="InterPro" id="IPR036188">
    <property type="entry name" value="FAD/NAD-bd_sf"/>
</dbReference>
<dbReference type="InterPro" id="IPR009158">
    <property type="entry name" value="G3P_DH_GlpB_su"/>
</dbReference>
<dbReference type="NCBIfam" id="TIGR03378">
    <property type="entry name" value="glycerol3P_GlpB"/>
    <property type="match status" value="1"/>
</dbReference>
<dbReference type="NCBIfam" id="NF003718">
    <property type="entry name" value="PRK05329.1-1"/>
    <property type="match status" value="1"/>
</dbReference>
<dbReference type="NCBIfam" id="NF003719">
    <property type="entry name" value="PRK05329.1-2"/>
    <property type="match status" value="1"/>
</dbReference>
<dbReference type="NCBIfam" id="NF003720">
    <property type="entry name" value="PRK05329.1-3"/>
    <property type="match status" value="1"/>
</dbReference>
<dbReference type="NCBIfam" id="NF003721">
    <property type="entry name" value="PRK05329.1-4"/>
    <property type="match status" value="1"/>
</dbReference>
<dbReference type="Pfam" id="PF00890">
    <property type="entry name" value="FAD_binding_2"/>
    <property type="match status" value="1"/>
</dbReference>
<dbReference type="PIRSF" id="PIRSF000141">
    <property type="entry name" value="Anaerobic_G3P_dh"/>
    <property type="match status" value="1"/>
</dbReference>
<dbReference type="SUPFAM" id="SSF51905">
    <property type="entry name" value="FAD/NAD(P)-binding domain"/>
    <property type="match status" value="1"/>
</dbReference>
<organism>
    <name type="scientific">Escherichia coli O7:K1 (strain IAI39 / ExPEC)</name>
    <dbReference type="NCBI Taxonomy" id="585057"/>
    <lineage>
        <taxon>Bacteria</taxon>
        <taxon>Pseudomonadati</taxon>
        <taxon>Pseudomonadota</taxon>
        <taxon>Gammaproteobacteria</taxon>
        <taxon>Enterobacterales</taxon>
        <taxon>Enterobacteriaceae</taxon>
        <taxon>Escherichia</taxon>
    </lineage>
</organism>